<dbReference type="EC" id="2.7.1.207" evidence="1"/>
<dbReference type="EMBL" id="BX571856">
    <property type="protein sequence ID" value="CAG41259.1"/>
    <property type="molecule type" value="Genomic_DNA"/>
</dbReference>
<dbReference type="RefSeq" id="WP_000983330.1">
    <property type="nucleotide sequence ID" value="NC_002952.2"/>
</dbReference>
<dbReference type="SMR" id="Q6GEN9"/>
<dbReference type="KEGG" id="sar:SAR2281"/>
<dbReference type="HOGENOM" id="CLU_029688_0_0_9"/>
<dbReference type="Proteomes" id="UP000000596">
    <property type="component" value="Chromosome"/>
</dbReference>
<dbReference type="GO" id="GO:0005886">
    <property type="term" value="C:plasma membrane"/>
    <property type="evidence" value="ECO:0007669"/>
    <property type="project" value="UniProtKB-SubCell"/>
</dbReference>
<dbReference type="GO" id="GO:0016301">
    <property type="term" value="F:kinase activity"/>
    <property type="evidence" value="ECO:0007669"/>
    <property type="project" value="UniProtKB-KW"/>
</dbReference>
<dbReference type="GO" id="GO:0022869">
    <property type="term" value="F:protein-N(PI)-phosphohistidine-lactose phosphotransferase system transporter activity"/>
    <property type="evidence" value="ECO:0007669"/>
    <property type="project" value="InterPro"/>
</dbReference>
<dbReference type="GO" id="GO:1901264">
    <property type="term" value="P:carbohydrate derivative transport"/>
    <property type="evidence" value="ECO:0007669"/>
    <property type="project" value="TreeGrafter"/>
</dbReference>
<dbReference type="GO" id="GO:0009401">
    <property type="term" value="P:phosphoenolpyruvate-dependent sugar phosphotransferase system"/>
    <property type="evidence" value="ECO:0007669"/>
    <property type="project" value="UniProtKB-KW"/>
</dbReference>
<dbReference type="CDD" id="cd05565">
    <property type="entry name" value="PTS_IIB_lactose"/>
    <property type="match status" value="1"/>
</dbReference>
<dbReference type="Gene3D" id="3.40.50.2300">
    <property type="match status" value="1"/>
</dbReference>
<dbReference type="InterPro" id="IPR004801">
    <property type="entry name" value="LacE"/>
</dbReference>
<dbReference type="InterPro" id="IPR036095">
    <property type="entry name" value="PTS_EIIB-like_sf"/>
</dbReference>
<dbReference type="InterPro" id="IPR003501">
    <property type="entry name" value="PTS_EIIB_2/3"/>
</dbReference>
<dbReference type="InterPro" id="IPR013012">
    <property type="entry name" value="PTS_EIIB_3"/>
</dbReference>
<dbReference type="InterPro" id="IPR003352">
    <property type="entry name" value="PTS_EIIC"/>
</dbReference>
<dbReference type="InterPro" id="IPR004501">
    <property type="entry name" value="PTS_EIIC_3"/>
</dbReference>
<dbReference type="InterPro" id="IPR041713">
    <property type="entry name" value="PTS_IIB"/>
</dbReference>
<dbReference type="InterPro" id="IPR051088">
    <property type="entry name" value="PTS_Sugar-EIIC/EIIB"/>
</dbReference>
<dbReference type="NCBIfam" id="TIGR00394">
    <property type="entry name" value="lac_pts_IIC"/>
    <property type="match status" value="1"/>
</dbReference>
<dbReference type="NCBIfam" id="TIGR00410">
    <property type="entry name" value="lacE"/>
    <property type="match status" value="1"/>
</dbReference>
<dbReference type="NCBIfam" id="TIGR00853">
    <property type="entry name" value="pts-lac"/>
    <property type="match status" value="1"/>
</dbReference>
<dbReference type="PANTHER" id="PTHR33989">
    <property type="match status" value="1"/>
</dbReference>
<dbReference type="PANTHER" id="PTHR33989:SF8">
    <property type="entry name" value="PERMEASE IIC COMPONENT"/>
    <property type="match status" value="1"/>
</dbReference>
<dbReference type="Pfam" id="PF02378">
    <property type="entry name" value="PTS_EIIC"/>
    <property type="match status" value="1"/>
</dbReference>
<dbReference type="Pfam" id="PF02302">
    <property type="entry name" value="PTS_IIB"/>
    <property type="match status" value="1"/>
</dbReference>
<dbReference type="SUPFAM" id="SSF52794">
    <property type="entry name" value="PTS system IIB component-like"/>
    <property type="match status" value="1"/>
</dbReference>
<dbReference type="PROSITE" id="PS51100">
    <property type="entry name" value="PTS_EIIB_TYPE_3"/>
    <property type="match status" value="1"/>
</dbReference>
<dbReference type="PROSITE" id="PS51105">
    <property type="entry name" value="PTS_EIIC_TYPE_3"/>
    <property type="match status" value="1"/>
</dbReference>
<comment type="function">
    <text evidence="1">The phosphoenolpyruvate-dependent sugar phosphotransferase system (sugar PTS), a major carbohydrate active transport system, catalyzes the phosphorylation of incoming sugar substrates concomitantly with their translocation across the cell membrane. The enzyme II LacEF PTS system is involved in lactose transport.</text>
</comment>
<comment type="catalytic activity">
    <reaction evidence="1">
        <text>lactose(out) + N(pros)-phospho-L-histidyl-[protein] = lactose 6-phosphate(in) + L-histidyl-[protein]</text>
        <dbReference type="Rhea" id="RHEA:42400"/>
        <dbReference type="Rhea" id="RHEA-COMP:9745"/>
        <dbReference type="Rhea" id="RHEA-COMP:9746"/>
        <dbReference type="ChEBI" id="CHEBI:17716"/>
        <dbReference type="ChEBI" id="CHEBI:29979"/>
        <dbReference type="ChEBI" id="CHEBI:64837"/>
        <dbReference type="ChEBI" id="CHEBI:79080"/>
        <dbReference type="EC" id="2.7.1.207"/>
    </reaction>
</comment>
<comment type="subcellular location">
    <subcellularLocation>
        <location evidence="1 3">Cell membrane</location>
        <topology evidence="1 3">Multi-pass membrane protein</topology>
    </subcellularLocation>
</comment>
<comment type="induction">
    <text evidence="1">Induced by lactose, galactose and galactose-6-P. Repressed by glucose.</text>
</comment>
<comment type="domain">
    <text evidence="3">The EIIC type-3 domain forms the PTS system translocation channel and contains the specific substrate-binding site.</text>
</comment>
<comment type="domain">
    <text evidence="2">The PTS EIIB type-3 domain is phosphorylated by phospho-EIIA on a cysteinyl residue. Then, it transfers the phosphoryl group to the sugar substrate concomitantly with the sugar uptake processed by the PTS EIIC type-3 domain.</text>
</comment>
<gene>
    <name evidence="1" type="primary">lacE</name>
    <name type="ordered locus">SAR2281</name>
</gene>
<keyword id="KW-1003">Cell membrane</keyword>
<keyword id="KW-0418">Kinase</keyword>
<keyword id="KW-0472">Membrane</keyword>
<keyword id="KW-0597">Phosphoprotein</keyword>
<keyword id="KW-0598">Phosphotransferase system</keyword>
<keyword id="KW-0762">Sugar transport</keyword>
<keyword id="KW-0808">Transferase</keyword>
<keyword id="KW-0812">Transmembrane</keyword>
<keyword id="KW-1133">Transmembrane helix</keyword>
<keyword id="KW-0813">Transport</keyword>
<evidence type="ECO:0000250" key="1">
    <source>
        <dbReference type="UniProtKB" id="P11162"/>
    </source>
</evidence>
<evidence type="ECO:0000255" key="2">
    <source>
        <dbReference type="PROSITE-ProRule" id="PRU00423"/>
    </source>
</evidence>
<evidence type="ECO:0000255" key="3">
    <source>
        <dbReference type="PROSITE-ProRule" id="PRU00428"/>
    </source>
</evidence>
<sequence length="570" mass="62432">MMQKLIAQIEKGKPFFEKLSRNIYLRAIRDGFISAMPVILFSSIFLLIAYVPNIFGFKWDKGMEAILMKPYNYTMGLVAFLVAGTTAKSLTDSFNRKLESTNQINFISTMLAAMCGFLFLASDPAKDGGFLSAFMGTKGLLTAFLSAFVTVIVYNFCVKRNITIKMPKEVPPNISQVFKDLIPFSAVIIILYALDLVIRNSFKSNVAEGILKLFEPLFTAADGWIGVTIIFGAFALFWFVGIHGPSIVEPAIAAITYANIEANFKLLQAGEHADKIITSGTQMFIVTFGGTGATLVVPFMFMWMTKSKRNKAIGRASVVPTFFGVNEPILFGAPLVLNPVFFIPFVLAPIVNVWIFKLFVEVLGMNSFSVNLPWTTPGPLGIIMGTGFGLWSFVLAITLIVVDIIIYYPFLKVYDSEILDEEEGRKESNSDLKEKVAANFDTKKADSILAASGVSDDAAKASNITEQTNVLVLCAGGGTSGLLANALNKAAEEYHVPVKAAAGGYGAHMDIMKEYQLIILAPQVASNYEDIKQDTDRLGIKLAKTQGAEYIKLTRDGQAALDFVQQQFEN</sequence>
<accession>Q6GEN9</accession>
<reference key="1">
    <citation type="journal article" date="2004" name="Proc. Natl. Acad. Sci. U.S.A.">
        <title>Complete genomes of two clinical Staphylococcus aureus strains: evidence for the rapid evolution of virulence and drug resistance.</title>
        <authorList>
            <person name="Holden M.T.G."/>
            <person name="Feil E.J."/>
            <person name="Lindsay J.A."/>
            <person name="Peacock S.J."/>
            <person name="Day N.P.J."/>
            <person name="Enright M.C."/>
            <person name="Foster T.J."/>
            <person name="Moore C.E."/>
            <person name="Hurst L."/>
            <person name="Atkin R."/>
            <person name="Barron A."/>
            <person name="Bason N."/>
            <person name="Bentley S.D."/>
            <person name="Chillingworth C."/>
            <person name="Chillingworth T."/>
            <person name="Churcher C."/>
            <person name="Clark L."/>
            <person name="Corton C."/>
            <person name="Cronin A."/>
            <person name="Doggett J."/>
            <person name="Dowd L."/>
            <person name="Feltwell T."/>
            <person name="Hance Z."/>
            <person name="Harris B."/>
            <person name="Hauser H."/>
            <person name="Holroyd S."/>
            <person name="Jagels K."/>
            <person name="James K.D."/>
            <person name="Lennard N."/>
            <person name="Line A."/>
            <person name="Mayes R."/>
            <person name="Moule S."/>
            <person name="Mungall K."/>
            <person name="Ormond D."/>
            <person name="Quail M.A."/>
            <person name="Rabbinowitsch E."/>
            <person name="Rutherford K.M."/>
            <person name="Sanders M."/>
            <person name="Sharp S."/>
            <person name="Simmonds M."/>
            <person name="Stevens K."/>
            <person name="Whitehead S."/>
            <person name="Barrell B.G."/>
            <person name="Spratt B.G."/>
            <person name="Parkhill J."/>
        </authorList>
    </citation>
    <scope>NUCLEOTIDE SEQUENCE [LARGE SCALE GENOMIC DNA]</scope>
    <source>
        <strain>MRSA252</strain>
    </source>
</reference>
<protein>
    <recommendedName>
        <fullName evidence="1">PTS system lactose-specific EIICB component</fullName>
    </recommendedName>
    <alternativeName>
        <fullName evidence="1">EIICB-Lac</fullName>
        <shortName evidence="1">EII-Lac</shortName>
    </alternativeName>
    <domain>
        <recommendedName>
            <fullName evidence="1">PTS system lactose-specific EIIC component</fullName>
        </recommendedName>
        <alternativeName>
            <fullName evidence="1">Lactose permease IIC component</fullName>
        </alternativeName>
    </domain>
    <domain>
        <recommendedName>
            <fullName evidence="1">PTS system lactose-specific EIIB component</fullName>
            <ecNumber evidence="1">2.7.1.207</ecNumber>
        </recommendedName>
        <alternativeName>
            <fullName evidence="1">Lactose-specific phosphotransferase enzyme IIB component</fullName>
        </alternativeName>
    </domain>
</protein>
<name>PTLCB_STAAR</name>
<organism>
    <name type="scientific">Staphylococcus aureus (strain MRSA252)</name>
    <dbReference type="NCBI Taxonomy" id="282458"/>
    <lineage>
        <taxon>Bacteria</taxon>
        <taxon>Bacillati</taxon>
        <taxon>Bacillota</taxon>
        <taxon>Bacilli</taxon>
        <taxon>Bacillales</taxon>
        <taxon>Staphylococcaceae</taxon>
        <taxon>Staphylococcus</taxon>
    </lineage>
</organism>
<proteinExistence type="inferred from homology"/>
<feature type="chain" id="PRO_0000186588" description="PTS system lactose-specific EIICB component">
    <location>
        <begin position="1"/>
        <end position="570"/>
    </location>
</feature>
<feature type="transmembrane region" description="Helical" evidence="3">
    <location>
        <begin position="31"/>
        <end position="51"/>
    </location>
</feature>
<feature type="transmembrane region" description="Helical" evidence="3">
    <location>
        <begin position="65"/>
        <end position="85"/>
    </location>
</feature>
<feature type="transmembrane region" description="Helical" evidence="3">
    <location>
        <begin position="104"/>
        <end position="124"/>
    </location>
</feature>
<feature type="transmembrane region" description="Helical" evidence="3">
    <location>
        <begin position="133"/>
        <end position="153"/>
    </location>
</feature>
<feature type="transmembrane region" description="Helical" evidence="3">
    <location>
        <begin position="178"/>
        <end position="198"/>
    </location>
</feature>
<feature type="transmembrane region" description="Helical" evidence="3">
    <location>
        <begin position="223"/>
        <end position="243"/>
    </location>
</feature>
<feature type="transmembrane region" description="Helical" evidence="3">
    <location>
        <begin position="283"/>
        <end position="303"/>
    </location>
</feature>
<feature type="transmembrane region" description="Helical" evidence="3">
    <location>
        <begin position="340"/>
        <end position="360"/>
    </location>
</feature>
<feature type="transmembrane region" description="Helical" evidence="3">
    <location>
        <begin position="382"/>
        <end position="402"/>
    </location>
</feature>
<feature type="domain" description="PTS EIIC type-3" evidence="3">
    <location>
        <begin position="9"/>
        <end position="410"/>
    </location>
</feature>
<feature type="domain" description="PTS EIIB type-3" evidence="2">
    <location>
        <begin position="467"/>
        <end position="570"/>
    </location>
</feature>
<feature type="active site" description="Phosphocysteine intermediate; for EIIB activity" evidence="1">
    <location>
        <position position="474"/>
    </location>
</feature>
<feature type="modified residue" description="Phosphocysteine; by EIIA" evidence="1 2">
    <location>
        <position position="474"/>
    </location>
</feature>